<sequence length="700" mass="78779">MKVREILVTSALPYANGDIHLGHLVEYIQTDIWVRSMKAQGHKVTYVCADDAHGTAIMLKAEDNGVTPEQQIANVQAAHEADFAKFLINFDNYHSTHSEENREFSELIYRRLRDAGHISTRDVEQLFDPEKQLFLADRFVKGTCPECAATDQYGDNCEVCGTTYDATELKNPYSTLSNATPILKTSKHYFFDLPEFEQFLKDWTRSDNRLQTSVANKLQEWFDAGLTSWDISRDAPYFGFQIPDTPSDEPDKYFYVWLDAPVGYMASFQNLCDKRAGTEEALDFDHYWAQENEHKTEVYHFIGKDIVYFHALFWPAMLAGSELRTPTGVFAHGFLMVNGEKMSKSRGTFIKADTYAEHLHPEYLRYYFASKLSDKVEDINLDLEDFMQKVNSDLVGKVVNIASRSAGFLVKKYDGMLTDVCAEPSLLEDITKTGDEIAAAYENREFSRAMRLIMQCADKANEYIDDKKPWALAKVEGAEQEVQDVCSVAINIFRQLMVYLAPVLPELTANAKEFLNIDDLSFASRNEWLLGHQINKFKPLMQRIEEKDIAAMVEDSKASLTQVGAPTASQDDKAAAKNTSPAAMPSSTEQADYIGIEDFAKVEMKVAHVIACNHVEGADKLLQFTLDVGEAQPRNVFSGIRKFYEPEQLQGKKVICVTNLAPRKMKFGISEGMVLSSGDPKTGLVVITLPDEAVIGDSLA</sequence>
<protein>
    <recommendedName>
        <fullName evidence="1">Methionine--tRNA ligase</fullName>
        <ecNumber evidence="1">6.1.1.10</ecNumber>
    </recommendedName>
    <alternativeName>
        <fullName evidence="1">Methionyl-tRNA synthetase</fullName>
        <shortName evidence="1">MetRS</shortName>
    </alternativeName>
</protein>
<proteinExistence type="inferred from homology"/>
<organism>
    <name type="scientific">Psychrobacter cryohalolentis (strain ATCC BAA-1226 / DSM 17306 / VKM B-2378 / K5)</name>
    <dbReference type="NCBI Taxonomy" id="335284"/>
    <lineage>
        <taxon>Bacteria</taxon>
        <taxon>Pseudomonadati</taxon>
        <taxon>Pseudomonadota</taxon>
        <taxon>Gammaproteobacteria</taxon>
        <taxon>Moraxellales</taxon>
        <taxon>Moraxellaceae</taxon>
        <taxon>Psychrobacter</taxon>
    </lineage>
</organism>
<accession>Q1QAD0</accession>
<evidence type="ECO:0000255" key="1">
    <source>
        <dbReference type="HAMAP-Rule" id="MF_00098"/>
    </source>
</evidence>
<evidence type="ECO:0000256" key="2">
    <source>
        <dbReference type="SAM" id="MobiDB-lite"/>
    </source>
</evidence>
<dbReference type="EC" id="6.1.1.10" evidence="1"/>
<dbReference type="EMBL" id="CP000323">
    <property type="protein sequence ID" value="ABE75373.1"/>
    <property type="molecule type" value="Genomic_DNA"/>
</dbReference>
<dbReference type="RefSeq" id="WP_011513922.1">
    <property type="nucleotide sequence ID" value="NC_007969.1"/>
</dbReference>
<dbReference type="SMR" id="Q1QAD0"/>
<dbReference type="STRING" id="335284.Pcryo_1596"/>
<dbReference type="KEGG" id="pcr:Pcryo_1596"/>
<dbReference type="eggNOG" id="COG0073">
    <property type="taxonomic scope" value="Bacteria"/>
</dbReference>
<dbReference type="eggNOG" id="COG0143">
    <property type="taxonomic scope" value="Bacteria"/>
</dbReference>
<dbReference type="HOGENOM" id="CLU_009710_7_0_6"/>
<dbReference type="Proteomes" id="UP000002425">
    <property type="component" value="Chromosome"/>
</dbReference>
<dbReference type="GO" id="GO:0005829">
    <property type="term" value="C:cytosol"/>
    <property type="evidence" value="ECO:0007669"/>
    <property type="project" value="TreeGrafter"/>
</dbReference>
<dbReference type="GO" id="GO:0005524">
    <property type="term" value="F:ATP binding"/>
    <property type="evidence" value="ECO:0007669"/>
    <property type="project" value="UniProtKB-UniRule"/>
</dbReference>
<dbReference type="GO" id="GO:0046872">
    <property type="term" value="F:metal ion binding"/>
    <property type="evidence" value="ECO:0007669"/>
    <property type="project" value="UniProtKB-KW"/>
</dbReference>
<dbReference type="GO" id="GO:0004825">
    <property type="term" value="F:methionine-tRNA ligase activity"/>
    <property type="evidence" value="ECO:0007669"/>
    <property type="project" value="UniProtKB-UniRule"/>
</dbReference>
<dbReference type="GO" id="GO:0000049">
    <property type="term" value="F:tRNA binding"/>
    <property type="evidence" value="ECO:0007669"/>
    <property type="project" value="UniProtKB-KW"/>
</dbReference>
<dbReference type="GO" id="GO:0006431">
    <property type="term" value="P:methionyl-tRNA aminoacylation"/>
    <property type="evidence" value="ECO:0007669"/>
    <property type="project" value="UniProtKB-UniRule"/>
</dbReference>
<dbReference type="CDD" id="cd07957">
    <property type="entry name" value="Anticodon_Ia_Met"/>
    <property type="match status" value="1"/>
</dbReference>
<dbReference type="CDD" id="cd00814">
    <property type="entry name" value="MetRS_core"/>
    <property type="match status" value="1"/>
</dbReference>
<dbReference type="CDD" id="cd02800">
    <property type="entry name" value="tRNA_bind_EcMetRS_like"/>
    <property type="match status" value="1"/>
</dbReference>
<dbReference type="FunFam" id="1.10.730.10:FF:000005">
    <property type="entry name" value="Methionine--tRNA ligase"/>
    <property type="match status" value="1"/>
</dbReference>
<dbReference type="FunFam" id="2.20.28.20:FF:000001">
    <property type="entry name" value="Methionine--tRNA ligase"/>
    <property type="match status" value="1"/>
</dbReference>
<dbReference type="FunFam" id="2.40.50.140:FF:000042">
    <property type="entry name" value="Methionine--tRNA ligase"/>
    <property type="match status" value="1"/>
</dbReference>
<dbReference type="Gene3D" id="3.40.50.620">
    <property type="entry name" value="HUPs"/>
    <property type="match status" value="1"/>
</dbReference>
<dbReference type="Gene3D" id="1.10.730.10">
    <property type="entry name" value="Isoleucyl-tRNA Synthetase, Domain 1"/>
    <property type="match status" value="1"/>
</dbReference>
<dbReference type="Gene3D" id="2.20.28.20">
    <property type="entry name" value="Methionyl-tRNA synthetase, Zn-domain"/>
    <property type="match status" value="1"/>
</dbReference>
<dbReference type="Gene3D" id="2.40.50.140">
    <property type="entry name" value="Nucleic acid-binding proteins"/>
    <property type="match status" value="1"/>
</dbReference>
<dbReference type="HAMAP" id="MF_00098">
    <property type="entry name" value="Met_tRNA_synth_type1"/>
    <property type="match status" value="1"/>
</dbReference>
<dbReference type="InterPro" id="IPR001412">
    <property type="entry name" value="aa-tRNA-synth_I_CS"/>
</dbReference>
<dbReference type="InterPro" id="IPR041872">
    <property type="entry name" value="Anticodon_Met"/>
</dbReference>
<dbReference type="InterPro" id="IPR013155">
    <property type="entry name" value="M/V/L/I-tRNA-synth_anticd-bd"/>
</dbReference>
<dbReference type="InterPro" id="IPR004495">
    <property type="entry name" value="Met-tRNA-synth_bsu_C"/>
</dbReference>
<dbReference type="InterPro" id="IPR023458">
    <property type="entry name" value="Met-tRNA_ligase_1"/>
</dbReference>
<dbReference type="InterPro" id="IPR014758">
    <property type="entry name" value="Met-tRNA_synth"/>
</dbReference>
<dbReference type="InterPro" id="IPR015413">
    <property type="entry name" value="Methionyl/Leucyl_tRNA_Synth"/>
</dbReference>
<dbReference type="InterPro" id="IPR033911">
    <property type="entry name" value="MetRS_core"/>
</dbReference>
<dbReference type="InterPro" id="IPR029038">
    <property type="entry name" value="MetRS_Zn"/>
</dbReference>
<dbReference type="InterPro" id="IPR012340">
    <property type="entry name" value="NA-bd_OB-fold"/>
</dbReference>
<dbReference type="InterPro" id="IPR014729">
    <property type="entry name" value="Rossmann-like_a/b/a_fold"/>
</dbReference>
<dbReference type="InterPro" id="IPR002547">
    <property type="entry name" value="tRNA-bd_dom"/>
</dbReference>
<dbReference type="InterPro" id="IPR009080">
    <property type="entry name" value="tRNAsynth_Ia_anticodon-bd"/>
</dbReference>
<dbReference type="NCBIfam" id="TIGR00398">
    <property type="entry name" value="metG"/>
    <property type="match status" value="1"/>
</dbReference>
<dbReference type="NCBIfam" id="TIGR00399">
    <property type="entry name" value="metG_C_term"/>
    <property type="match status" value="1"/>
</dbReference>
<dbReference type="NCBIfam" id="NF001100">
    <property type="entry name" value="PRK00133.1"/>
    <property type="match status" value="1"/>
</dbReference>
<dbReference type="PANTHER" id="PTHR45765">
    <property type="entry name" value="METHIONINE--TRNA LIGASE"/>
    <property type="match status" value="1"/>
</dbReference>
<dbReference type="PANTHER" id="PTHR45765:SF1">
    <property type="entry name" value="METHIONINE--TRNA LIGASE, CYTOPLASMIC"/>
    <property type="match status" value="1"/>
</dbReference>
<dbReference type="Pfam" id="PF08264">
    <property type="entry name" value="Anticodon_1"/>
    <property type="match status" value="1"/>
</dbReference>
<dbReference type="Pfam" id="PF09334">
    <property type="entry name" value="tRNA-synt_1g"/>
    <property type="match status" value="1"/>
</dbReference>
<dbReference type="Pfam" id="PF01588">
    <property type="entry name" value="tRNA_bind"/>
    <property type="match status" value="1"/>
</dbReference>
<dbReference type="PRINTS" id="PR01041">
    <property type="entry name" value="TRNASYNTHMET"/>
</dbReference>
<dbReference type="SUPFAM" id="SSF47323">
    <property type="entry name" value="Anticodon-binding domain of a subclass of class I aminoacyl-tRNA synthetases"/>
    <property type="match status" value="1"/>
</dbReference>
<dbReference type="SUPFAM" id="SSF57770">
    <property type="entry name" value="Methionyl-tRNA synthetase (MetRS), Zn-domain"/>
    <property type="match status" value="1"/>
</dbReference>
<dbReference type="SUPFAM" id="SSF50249">
    <property type="entry name" value="Nucleic acid-binding proteins"/>
    <property type="match status" value="1"/>
</dbReference>
<dbReference type="SUPFAM" id="SSF52374">
    <property type="entry name" value="Nucleotidylyl transferase"/>
    <property type="match status" value="1"/>
</dbReference>
<dbReference type="PROSITE" id="PS00178">
    <property type="entry name" value="AA_TRNA_LIGASE_I"/>
    <property type="match status" value="1"/>
</dbReference>
<dbReference type="PROSITE" id="PS50886">
    <property type="entry name" value="TRBD"/>
    <property type="match status" value="1"/>
</dbReference>
<name>SYM_PSYCK</name>
<feature type="chain" id="PRO_0000331879" description="Methionine--tRNA ligase">
    <location>
        <begin position="1"/>
        <end position="700"/>
    </location>
</feature>
<feature type="domain" description="tRNA-binding" evidence="1">
    <location>
        <begin position="598"/>
        <end position="700"/>
    </location>
</feature>
<feature type="region of interest" description="Disordered" evidence="2">
    <location>
        <begin position="562"/>
        <end position="587"/>
    </location>
</feature>
<feature type="short sequence motif" description="'HIGH' region">
    <location>
        <begin position="13"/>
        <end position="23"/>
    </location>
</feature>
<feature type="short sequence motif" description="'KMSKS' region">
    <location>
        <begin position="341"/>
        <end position="345"/>
    </location>
</feature>
<feature type="compositionally biased region" description="Polar residues" evidence="2">
    <location>
        <begin position="577"/>
        <end position="587"/>
    </location>
</feature>
<feature type="binding site" evidence="1">
    <location>
        <position position="144"/>
    </location>
    <ligand>
        <name>Zn(2+)</name>
        <dbReference type="ChEBI" id="CHEBI:29105"/>
    </ligand>
</feature>
<feature type="binding site" evidence="1">
    <location>
        <position position="147"/>
    </location>
    <ligand>
        <name>Zn(2+)</name>
        <dbReference type="ChEBI" id="CHEBI:29105"/>
    </ligand>
</feature>
<feature type="binding site" evidence="1">
    <location>
        <position position="157"/>
    </location>
    <ligand>
        <name>Zn(2+)</name>
        <dbReference type="ChEBI" id="CHEBI:29105"/>
    </ligand>
</feature>
<feature type="binding site" evidence="1">
    <location>
        <position position="160"/>
    </location>
    <ligand>
        <name>Zn(2+)</name>
        <dbReference type="ChEBI" id="CHEBI:29105"/>
    </ligand>
</feature>
<feature type="binding site" evidence="1">
    <location>
        <position position="344"/>
    </location>
    <ligand>
        <name>ATP</name>
        <dbReference type="ChEBI" id="CHEBI:30616"/>
    </ligand>
</feature>
<keyword id="KW-0030">Aminoacyl-tRNA synthetase</keyword>
<keyword id="KW-0067">ATP-binding</keyword>
<keyword id="KW-0963">Cytoplasm</keyword>
<keyword id="KW-0436">Ligase</keyword>
<keyword id="KW-0479">Metal-binding</keyword>
<keyword id="KW-0547">Nucleotide-binding</keyword>
<keyword id="KW-0648">Protein biosynthesis</keyword>
<keyword id="KW-0694">RNA-binding</keyword>
<keyword id="KW-0820">tRNA-binding</keyword>
<keyword id="KW-0862">Zinc</keyword>
<comment type="function">
    <text evidence="1">Is required not only for elongation of protein synthesis but also for the initiation of all mRNA translation through initiator tRNA(fMet) aminoacylation.</text>
</comment>
<comment type="catalytic activity">
    <reaction evidence="1">
        <text>tRNA(Met) + L-methionine + ATP = L-methionyl-tRNA(Met) + AMP + diphosphate</text>
        <dbReference type="Rhea" id="RHEA:13481"/>
        <dbReference type="Rhea" id="RHEA-COMP:9667"/>
        <dbReference type="Rhea" id="RHEA-COMP:9698"/>
        <dbReference type="ChEBI" id="CHEBI:30616"/>
        <dbReference type="ChEBI" id="CHEBI:33019"/>
        <dbReference type="ChEBI" id="CHEBI:57844"/>
        <dbReference type="ChEBI" id="CHEBI:78442"/>
        <dbReference type="ChEBI" id="CHEBI:78530"/>
        <dbReference type="ChEBI" id="CHEBI:456215"/>
        <dbReference type="EC" id="6.1.1.10"/>
    </reaction>
</comment>
<comment type="cofactor">
    <cofactor evidence="1">
        <name>Zn(2+)</name>
        <dbReference type="ChEBI" id="CHEBI:29105"/>
    </cofactor>
    <text evidence="1">Binds 1 zinc ion per subunit.</text>
</comment>
<comment type="subunit">
    <text evidence="1">Homodimer.</text>
</comment>
<comment type="subcellular location">
    <subcellularLocation>
        <location evidence="1">Cytoplasm</location>
    </subcellularLocation>
</comment>
<comment type="similarity">
    <text evidence="1">Belongs to the class-I aminoacyl-tRNA synthetase family. MetG type 1 subfamily.</text>
</comment>
<reference key="1">
    <citation type="submission" date="2006-03" db="EMBL/GenBank/DDBJ databases">
        <title>Complete sequence of chromosome of Psychrobacter cryohalolentis K5.</title>
        <authorList>
            <consortium name="US DOE Joint Genome Institute"/>
            <person name="Copeland A."/>
            <person name="Lucas S."/>
            <person name="Lapidus A."/>
            <person name="Barry K."/>
            <person name="Detter J.C."/>
            <person name="Glavina T."/>
            <person name="Hammon N."/>
            <person name="Israni S."/>
            <person name="Dalin E."/>
            <person name="Tice H."/>
            <person name="Pitluck S."/>
            <person name="Brettin T."/>
            <person name="Bruce D."/>
            <person name="Han C."/>
            <person name="Tapia R."/>
            <person name="Sims D.R."/>
            <person name="Gilna P."/>
            <person name="Schmutz J."/>
            <person name="Larimer F."/>
            <person name="Land M."/>
            <person name="Hauser L."/>
            <person name="Kyrpides N."/>
            <person name="Kim E."/>
            <person name="Richardson P."/>
        </authorList>
    </citation>
    <scope>NUCLEOTIDE SEQUENCE [LARGE SCALE GENOMIC DNA]</scope>
    <source>
        <strain>ATCC BAA-1226 / DSM 17306 / VKM B-2378 / K5</strain>
    </source>
</reference>
<gene>
    <name evidence="1" type="primary">metG</name>
    <name type="ordered locus">Pcryo_1596</name>
</gene>